<dbReference type="EMBL" id="AB110204">
    <property type="protein sequence ID" value="BAC78596.1"/>
    <property type="molecule type" value="mRNA"/>
</dbReference>
<dbReference type="EMBL" id="AP004161">
    <property type="protein sequence ID" value="BAD07765.1"/>
    <property type="molecule type" value="Genomic_DNA"/>
</dbReference>
<dbReference type="EMBL" id="AP008208">
    <property type="protein sequence ID" value="BAF09807.1"/>
    <property type="molecule type" value="Genomic_DNA"/>
</dbReference>
<dbReference type="EMBL" id="AP014958">
    <property type="protein sequence ID" value="BAS80554.1"/>
    <property type="status" value="ALT_SEQ"/>
    <property type="molecule type" value="Genomic_DNA"/>
</dbReference>
<dbReference type="RefSeq" id="XP_015625722.1">
    <property type="nucleotide sequence ID" value="XM_015770236.1"/>
</dbReference>
<dbReference type="SMR" id="Q0DY81"/>
<dbReference type="FunCoup" id="Q0DY81">
    <property type="interactions" value="1514"/>
</dbReference>
<dbReference type="STRING" id="39947.A0A0P0VNU0"/>
<dbReference type="PaxDb" id="39947-A0A0P0VNU0"/>
<dbReference type="KEGG" id="dosa:Os02g0709900"/>
<dbReference type="HOGENOM" id="CLU_1590653_0_0_1"/>
<dbReference type="InParanoid" id="Q0DY81"/>
<dbReference type="OrthoDB" id="673795at2759"/>
<dbReference type="Proteomes" id="UP000000763">
    <property type="component" value="Chromosome 2"/>
</dbReference>
<dbReference type="Proteomes" id="UP000059680">
    <property type="component" value="Chromosome 2"/>
</dbReference>
<dbReference type="GO" id="GO:0005652">
    <property type="term" value="C:nuclear lamina"/>
    <property type="evidence" value="ECO:0000314"/>
    <property type="project" value="UniProtKB"/>
</dbReference>
<dbReference type="GO" id="GO:0016363">
    <property type="term" value="C:nuclear matrix"/>
    <property type="evidence" value="ECO:0000314"/>
    <property type="project" value="UniProtKB"/>
</dbReference>
<dbReference type="GO" id="GO:0006997">
    <property type="term" value="P:nucleus organization"/>
    <property type="evidence" value="ECO:0007669"/>
    <property type="project" value="InterPro"/>
</dbReference>
<dbReference type="InterPro" id="IPR040418">
    <property type="entry name" value="CRWN"/>
</dbReference>
<dbReference type="PANTHER" id="PTHR31908:SF11">
    <property type="entry name" value="PROTEIN CROWDED NUCLEI 1"/>
    <property type="match status" value="1"/>
</dbReference>
<dbReference type="PANTHER" id="PTHR31908">
    <property type="entry name" value="PROTEIN CROWDED NUCLEI 4"/>
    <property type="match status" value="1"/>
</dbReference>
<dbReference type="SUPFAM" id="SSF57997">
    <property type="entry name" value="Tropomyosin"/>
    <property type="match status" value="1"/>
</dbReference>
<comment type="function">
    <text evidence="1">Architectural component of nuclear structure that plays different roles in controlling nuclear size and morphology.</text>
</comment>
<comment type="subcellular location">
    <subcellularLocation>
        <location evidence="4">Nucleus matrix</location>
    </subcellularLocation>
    <subcellularLocation>
        <location evidence="4">Nucleus lamina</location>
    </subcellularLocation>
    <text evidence="4">Forms aggregated foci in the inner nuclear matrix region (PubMed:15659629). Localizes in the nuclear periphery (PubMed:15659629).</text>
</comment>
<comment type="similarity">
    <text evidence="6">Belongs to the CRWN family.</text>
</comment>
<comment type="sequence caution" evidence="6">
    <conflict type="erroneous gene model prediction">
        <sequence resource="EMBL-CDS" id="BAS80554"/>
    </conflict>
</comment>
<proteinExistence type="evidence at transcript level"/>
<keyword id="KW-0175">Coiled coil</keyword>
<keyword id="KW-0539">Nucleus</keyword>
<keyword id="KW-1185">Reference proteome</keyword>
<feature type="chain" id="PRO_0000452399" description="Nuclear matrix constituent protein 1a">
    <location>
        <begin position="1"/>
        <end position="1155"/>
    </location>
</feature>
<feature type="region of interest" description="Disordered" evidence="3">
    <location>
        <begin position="1"/>
        <end position="36"/>
    </location>
</feature>
<feature type="region of interest" description="Disordered" evidence="3">
    <location>
        <begin position="293"/>
        <end position="315"/>
    </location>
</feature>
<feature type="region of interest" description="Disordered" evidence="3">
    <location>
        <begin position="910"/>
        <end position="934"/>
    </location>
</feature>
<feature type="region of interest" description="Disordered" evidence="3">
    <location>
        <begin position="953"/>
        <end position="1155"/>
    </location>
</feature>
<feature type="coiled-coil region" evidence="2">
    <location>
        <begin position="120"/>
        <end position="316"/>
    </location>
</feature>
<feature type="coiled-coil region" evidence="2">
    <location>
        <begin position="372"/>
        <end position="704"/>
    </location>
</feature>
<feature type="compositionally biased region" description="Polar residues" evidence="3">
    <location>
        <begin position="11"/>
        <end position="21"/>
    </location>
</feature>
<feature type="compositionally biased region" description="Basic residues" evidence="3">
    <location>
        <begin position="916"/>
        <end position="934"/>
    </location>
</feature>
<feature type="compositionally biased region" description="Low complexity" evidence="3">
    <location>
        <begin position="1023"/>
        <end position="1034"/>
    </location>
</feature>
<feature type="compositionally biased region" description="Basic residues" evidence="3">
    <location>
        <begin position="1035"/>
        <end position="1044"/>
    </location>
</feature>
<feature type="compositionally biased region" description="Acidic residues" evidence="3">
    <location>
        <begin position="1128"/>
        <end position="1137"/>
    </location>
</feature>
<name>NMCPA_ORYSJ</name>
<gene>
    <name evidence="5" type="primary">NMCP1A</name>
    <name evidence="8" type="ordered locus">Os02g0709900</name>
    <name evidence="6" type="ordered locus">LOC_Os02g48010</name>
    <name evidence="7" type="ORF">OJ1311_H06.10-1</name>
</gene>
<organism>
    <name type="scientific">Oryza sativa subsp. japonica</name>
    <name type="common">Rice</name>
    <dbReference type="NCBI Taxonomy" id="39947"/>
    <lineage>
        <taxon>Eukaryota</taxon>
        <taxon>Viridiplantae</taxon>
        <taxon>Streptophyta</taxon>
        <taxon>Embryophyta</taxon>
        <taxon>Tracheophyta</taxon>
        <taxon>Spermatophyta</taxon>
        <taxon>Magnoliopsida</taxon>
        <taxon>Liliopsida</taxon>
        <taxon>Poales</taxon>
        <taxon>Poaceae</taxon>
        <taxon>BOP clade</taxon>
        <taxon>Oryzoideae</taxon>
        <taxon>Oryzeae</taxon>
        <taxon>Oryzinae</taxon>
        <taxon>Oryza</taxon>
        <taxon>Oryza sativa</taxon>
    </lineage>
</organism>
<evidence type="ECO:0000250" key="1">
    <source>
        <dbReference type="UniProtKB" id="Q0JJ05"/>
    </source>
</evidence>
<evidence type="ECO:0000255" key="2"/>
<evidence type="ECO:0000256" key="3">
    <source>
        <dbReference type="SAM" id="MobiDB-lite"/>
    </source>
</evidence>
<evidence type="ECO:0000269" key="4">
    <source>
    </source>
</evidence>
<evidence type="ECO:0000303" key="5">
    <source>
    </source>
</evidence>
<evidence type="ECO:0000305" key="6"/>
<evidence type="ECO:0000312" key="7">
    <source>
        <dbReference type="EMBL" id="BAD07765.1"/>
    </source>
</evidence>
<evidence type="ECO:0000312" key="8">
    <source>
        <dbReference type="EMBL" id="BAF09807.1"/>
    </source>
</evidence>
<sequence>MFTPQGKGWTGWSTPAPANQRSGGGAPAASAPLGKGKGTTLRVAELEQELHEYQYNMGLLLIEKKEWTAKLDEINQALTQKEEILKREQAAHLNAISEYERREESMRKALGVEKQCVTDLEKALREIRGEIAEVKFMSEKKITDAQSLEASLEEKRLEIEGKLHAADAKLAEANRKKSQADRDLEEVEARQRRLEKEKLYFENERKAGEDRIKRQEDSLRDWDKKLKESQNRILDLQRSLNDREERANENDKLFKIKQEELEEAKKALEHTKATLKIKEDDINKRLAELHLQEKEAESKNRKLEEREKKIAEREEKVSAREKVGLQKLLEDHNVKLESKRRDFDLQLENEKKSFDAMLVQKEADLVQREKDVRSSEEKLSKKEQVLNESKKKLEEWQNDLDTKSNALKKWEESLQNDEKQLSEQKLQIENERKQAEMYKLELESLKATVVAEKEKILQEQNNLKLTEEERQEHIMLTAQLKKEIDEYRMRSNSLSEETEDLRKQRQKFEEEWEQLDEKRTHLEEEAKKLNNEKKNLERWHDNEEKRLKDREDELDIKYKEQGENLALKEKSLIDNIDHQRLENEELLKRERADLQRNLQLHRHELEMEMEKKQASKERELEEKENELNRKMDFVENELKRAAELNESKIQKILLEKKQLQKEKEVLVEDRQKLETDKADIRRDIDSLNTLSKSLKERREAYNRDRNNLIDIFEKYKVCKNCGVIIFEGLDALALKDSTDIEYPSLAVEADDRSPNPDTLAQETGALVNSGGRLSLLQKCSRIFKFSPRKKAEQSSEQQAVKNTDFGARLEEASQSDDDYEPTPVYQVAYNSFDAEDLPSESGAFENEESERQDIADDVQMESSLGVADNCVDIHGTQSFDGNTDMVVDTTIVDVDQNGKDSAVLPVVDLEPETSKQGRRQQNRKGRAKGGVKRTRSVLAVVEDAKEILGENLEVKKDDGQGDSVTVGGTRKRRFAGATISEQDEDSEAHSESVSLGGQRRKRRQTAAAVTQAPGEKRYNLRRTTVANAATAAQTNKKKAAKKGSKQTVEATADDTEGTSKAEEPATGSKGASQSADDASQLPEYSQAEAGDTHGPVEVTSAEGVDIVDGIDAAPDAMPMTPSGSELGAEQDDEEDDDSERRNQSIGKKLWSFFTT</sequence>
<protein>
    <recommendedName>
        <fullName evidence="5">Nuclear matrix constituent protein 1a</fullName>
        <shortName evidence="5">OsNMCP1a</shortName>
    </recommendedName>
</protein>
<reference key="1">
    <citation type="journal article" date="2005" name="Plant Cell">
        <title>Functional isolation of novel nuclear proteins showing a variety of subnuclear localizations.</title>
        <authorList>
            <person name="Moriguchi K."/>
            <person name="Suzuki T."/>
            <person name="Ito Y."/>
            <person name="Yamazaki Y."/>
            <person name="Niwa Y."/>
            <person name="Kurata N."/>
        </authorList>
    </citation>
    <scope>NUCLEOTIDE SEQUENCE [MRNA]</scope>
    <scope>SUBCELLULAR LOCATION</scope>
    <source>
        <tissue>Panicle</tissue>
    </source>
</reference>
<reference key="2">
    <citation type="journal article" date="2005" name="Nature">
        <title>The map-based sequence of the rice genome.</title>
        <authorList>
            <consortium name="International rice genome sequencing project (IRGSP)"/>
        </authorList>
    </citation>
    <scope>NUCLEOTIDE SEQUENCE [LARGE SCALE GENOMIC DNA]</scope>
    <source>
        <strain>cv. Nipponbare</strain>
    </source>
</reference>
<reference key="3">
    <citation type="journal article" date="2008" name="Nucleic Acids Res.">
        <title>The rice annotation project database (RAP-DB): 2008 update.</title>
        <authorList>
            <consortium name="The rice annotation project (RAP)"/>
        </authorList>
    </citation>
    <scope>GENOME REANNOTATION</scope>
    <source>
        <strain>cv. Nipponbare</strain>
    </source>
</reference>
<reference key="4">
    <citation type="journal article" date="2013" name="Rice">
        <title>Improvement of the Oryza sativa Nipponbare reference genome using next generation sequence and optical map data.</title>
        <authorList>
            <person name="Kawahara Y."/>
            <person name="de la Bastide M."/>
            <person name="Hamilton J.P."/>
            <person name="Kanamori H."/>
            <person name="McCombie W.R."/>
            <person name="Ouyang S."/>
            <person name="Schwartz D.C."/>
            <person name="Tanaka T."/>
            <person name="Wu J."/>
            <person name="Zhou S."/>
            <person name="Childs K.L."/>
            <person name="Davidson R.M."/>
            <person name="Lin H."/>
            <person name="Quesada-Ocampo L."/>
            <person name="Vaillancourt B."/>
            <person name="Sakai H."/>
            <person name="Lee S.S."/>
            <person name="Kim J."/>
            <person name="Numa H."/>
            <person name="Itoh T."/>
            <person name="Buell C.R."/>
            <person name="Matsumoto T."/>
        </authorList>
    </citation>
    <scope>GENOME REANNOTATION</scope>
    <source>
        <strain>cv. Nipponbare</strain>
    </source>
</reference>
<accession>Q0DY81</accession>
<accession>A0A0P0VNU0</accession>
<accession>Q7XXP7</accession>